<keyword id="KW-0025">Alternative splicing</keyword>
<keyword id="KW-0649">Protein kinase inhibitor</keyword>
<keyword id="KW-1267">Proteomics identification</keyword>
<keyword id="KW-1185">Reference proteome</keyword>
<gene>
    <name type="primary">PKIB</name>
    <name type="synonym">PRKACN2</name>
</gene>
<comment type="function">
    <text evidence="1">Extremely potent competitive inhibitor of cAMP-dependent protein kinase activity, this protein interacts with the catalytic subunit of the enzyme after the cAMP-induced dissociation of its regulatory chains.</text>
</comment>
<comment type="interaction">
    <interactant intactId="EBI-12886396">
        <id>Q9C010-2</id>
    </interactant>
    <interactant intactId="EBI-9996449">
        <id>Q9BYR8</id>
        <label>KRTAP3-1</label>
    </interactant>
    <organismsDiffer>false</organismsDiffer>
    <experiments>3</experiments>
</comment>
<comment type="interaction">
    <interactant intactId="EBI-12886396">
        <id>Q9C010-2</id>
    </interactant>
    <interactant intactId="EBI-476586">
        <id>P17612</id>
        <label>PRKACA</label>
    </interactant>
    <organismsDiffer>false</organismsDiffer>
    <experiments>3</experiments>
</comment>
<comment type="alternative products">
    <event type="alternative splicing"/>
    <isoform>
        <id>Q9C010-1</id>
        <name>1</name>
        <sequence type="displayed"/>
    </isoform>
    <isoform>
        <id>Q9C010-2</id>
        <name>2</name>
        <sequence type="described" ref="VSP_046922"/>
    </isoform>
</comment>
<comment type="similarity">
    <text evidence="3">Belongs to the PKI family.</text>
</comment>
<evidence type="ECO:0000250" key="1"/>
<evidence type="ECO:0000256" key="2">
    <source>
        <dbReference type="SAM" id="MobiDB-lite"/>
    </source>
</evidence>
<evidence type="ECO:0000305" key="3"/>
<accession>Q9C010</accession>
<accession>B2RCK2</accession>
<accession>Q567T9</accession>
<accession>Q5T0Z7</accession>
<name>IPKB_HUMAN</name>
<proteinExistence type="evidence at protein level"/>
<reference key="1">
    <citation type="journal article" date="2000" name="Biochem. J.">
        <title>Cloning and mapping of human PKIB and PKIG, and comparison of tissue expression patterns of three members of the protein kinase inhibitor family, including PKIA.</title>
        <authorList>
            <person name="Zheng L."/>
            <person name="Yu L."/>
            <person name="Tu Q."/>
            <person name="Zhang M."/>
            <person name="He H."/>
            <person name="Chen W."/>
            <person name="Gao J."/>
            <person name="Yu J."/>
            <person name="Wu Q."/>
            <person name="Zhao S."/>
        </authorList>
    </citation>
    <scope>NUCLEOTIDE SEQUENCE [MRNA] (ISOFORM 1)</scope>
</reference>
<reference key="2">
    <citation type="journal article" date="2004" name="Nat. Genet.">
        <title>Complete sequencing and characterization of 21,243 full-length human cDNAs.</title>
        <authorList>
            <person name="Ota T."/>
            <person name="Suzuki Y."/>
            <person name="Nishikawa T."/>
            <person name="Otsuki T."/>
            <person name="Sugiyama T."/>
            <person name="Irie R."/>
            <person name="Wakamatsu A."/>
            <person name="Hayashi K."/>
            <person name="Sato H."/>
            <person name="Nagai K."/>
            <person name="Kimura K."/>
            <person name="Makita H."/>
            <person name="Sekine M."/>
            <person name="Obayashi M."/>
            <person name="Nishi T."/>
            <person name="Shibahara T."/>
            <person name="Tanaka T."/>
            <person name="Ishii S."/>
            <person name="Yamamoto J."/>
            <person name="Saito K."/>
            <person name="Kawai Y."/>
            <person name="Isono Y."/>
            <person name="Nakamura Y."/>
            <person name="Nagahari K."/>
            <person name="Murakami K."/>
            <person name="Yasuda T."/>
            <person name="Iwayanagi T."/>
            <person name="Wagatsuma M."/>
            <person name="Shiratori A."/>
            <person name="Sudo H."/>
            <person name="Hosoiri T."/>
            <person name="Kaku Y."/>
            <person name="Kodaira H."/>
            <person name="Kondo H."/>
            <person name="Sugawara M."/>
            <person name="Takahashi M."/>
            <person name="Kanda K."/>
            <person name="Yokoi T."/>
            <person name="Furuya T."/>
            <person name="Kikkawa E."/>
            <person name="Omura Y."/>
            <person name="Abe K."/>
            <person name="Kamihara K."/>
            <person name="Katsuta N."/>
            <person name="Sato K."/>
            <person name="Tanikawa M."/>
            <person name="Yamazaki M."/>
            <person name="Ninomiya K."/>
            <person name="Ishibashi T."/>
            <person name="Yamashita H."/>
            <person name="Murakawa K."/>
            <person name="Fujimori K."/>
            <person name="Tanai H."/>
            <person name="Kimata M."/>
            <person name="Watanabe M."/>
            <person name="Hiraoka S."/>
            <person name="Chiba Y."/>
            <person name="Ishida S."/>
            <person name="Ono Y."/>
            <person name="Takiguchi S."/>
            <person name="Watanabe S."/>
            <person name="Yosida M."/>
            <person name="Hotuta T."/>
            <person name="Kusano J."/>
            <person name="Kanehori K."/>
            <person name="Takahashi-Fujii A."/>
            <person name="Hara H."/>
            <person name="Tanase T.-O."/>
            <person name="Nomura Y."/>
            <person name="Togiya S."/>
            <person name="Komai F."/>
            <person name="Hara R."/>
            <person name="Takeuchi K."/>
            <person name="Arita M."/>
            <person name="Imose N."/>
            <person name="Musashino K."/>
            <person name="Yuuki H."/>
            <person name="Oshima A."/>
            <person name="Sasaki N."/>
            <person name="Aotsuka S."/>
            <person name="Yoshikawa Y."/>
            <person name="Matsunawa H."/>
            <person name="Ichihara T."/>
            <person name="Shiohata N."/>
            <person name="Sano S."/>
            <person name="Moriya S."/>
            <person name="Momiyama H."/>
            <person name="Satoh N."/>
            <person name="Takami S."/>
            <person name="Terashima Y."/>
            <person name="Suzuki O."/>
            <person name="Nakagawa S."/>
            <person name="Senoh A."/>
            <person name="Mizoguchi H."/>
            <person name="Goto Y."/>
            <person name="Shimizu F."/>
            <person name="Wakebe H."/>
            <person name="Hishigaki H."/>
            <person name="Watanabe T."/>
            <person name="Sugiyama A."/>
            <person name="Takemoto M."/>
            <person name="Kawakami B."/>
            <person name="Yamazaki M."/>
            <person name="Watanabe K."/>
            <person name="Kumagai A."/>
            <person name="Itakura S."/>
            <person name="Fukuzumi Y."/>
            <person name="Fujimori Y."/>
            <person name="Komiyama M."/>
            <person name="Tashiro H."/>
            <person name="Tanigami A."/>
            <person name="Fujiwara T."/>
            <person name="Ono T."/>
            <person name="Yamada K."/>
            <person name="Fujii Y."/>
            <person name="Ozaki K."/>
            <person name="Hirao M."/>
            <person name="Ohmori Y."/>
            <person name="Kawabata A."/>
            <person name="Hikiji T."/>
            <person name="Kobatake N."/>
            <person name="Inagaki H."/>
            <person name="Ikema Y."/>
            <person name="Okamoto S."/>
            <person name="Okitani R."/>
            <person name="Kawakami T."/>
            <person name="Noguchi S."/>
            <person name="Itoh T."/>
            <person name="Shigeta K."/>
            <person name="Senba T."/>
            <person name="Matsumura K."/>
            <person name="Nakajima Y."/>
            <person name="Mizuno T."/>
            <person name="Morinaga M."/>
            <person name="Sasaki M."/>
            <person name="Togashi T."/>
            <person name="Oyama M."/>
            <person name="Hata H."/>
            <person name="Watanabe M."/>
            <person name="Komatsu T."/>
            <person name="Mizushima-Sugano J."/>
            <person name="Satoh T."/>
            <person name="Shirai Y."/>
            <person name="Takahashi Y."/>
            <person name="Nakagawa K."/>
            <person name="Okumura K."/>
            <person name="Nagase T."/>
            <person name="Nomura N."/>
            <person name="Kikuchi H."/>
            <person name="Masuho Y."/>
            <person name="Yamashita R."/>
            <person name="Nakai K."/>
            <person name="Yada T."/>
            <person name="Nakamura Y."/>
            <person name="Ohara O."/>
            <person name="Isogai T."/>
            <person name="Sugano S."/>
        </authorList>
    </citation>
    <scope>NUCLEOTIDE SEQUENCE [LARGE SCALE MRNA] (ISOFORM 1)</scope>
    <source>
        <tissue>Subthalamic nucleus</tissue>
    </source>
</reference>
<reference key="3">
    <citation type="journal article" date="2003" name="Nature">
        <title>The DNA sequence and analysis of human chromosome 6.</title>
        <authorList>
            <person name="Mungall A.J."/>
            <person name="Palmer S.A."/>
            <person name="Sims S.K."/>
            <person name="Edwards C.A."/>
            <person name="Ashurst J.L."/>
            <person name="Wilming L."/>
            <person name="Jones M.C."/>
            <person name="Horton R."/>
            <person name="Hunt S.E."/>
            <person name="Scott C.E."/>
            <person name="Gilbert J.G.R."/>
            <person name="Clamp M.E."/>
            <person name="Bethel G."/>
            <person name="Milne S."/>
            <person name="Ainscough R."/>
            <person name="Almeida J.P."/>
            <person name="Ambrose K.D."/>
            <person name="Andrews T.D."/>
            <person name="Ashwell R.I.S."/>
            <person name="Babbage A.K."/>
            <person name="Bagguley C.L."/>
            <person name="Bailey J."/>
            <person name="Banerjee R."/>
            <person name="Barker D.J."/>
            <person name="Barlow K.F."/>
            <person name="Bates K."/>
            <person name="Beare D.M."/>
            <person name="Beasley H."/>
            <person name="Beasley O."/>
            <person name="Bird C.P."/>
            <person name="Blakey S.E."/>
            <person name="Bray-Allen S."/>
            <person name="Brook J."/>
            <person name="Brown A.J."/>
            <person name="Brown J.Y."/>
            <person name="Burford D.C."/>
            <person name="Burrill W."/>
            <person name="Burton J."/>
            <person name="Carder C."/>
            <person name="Carter N.P."/>
            <person name="Chapman J.C."/>
            <person name="Clark S.Y."/>
            <person name="Clark G."/>
            <person name="Clee C.M."/>
            <person name="Clegg S."/>
            <person name="Cobley V."/>
            <person name="Collier R.E."/>
            <person name="Collins J.E."/>
            <person name="Colman L.K."/>
            <person name="Corby N.R."/>
            <person name="Coville G.J."/>
            <person name="Culley K.M."/>
            <person name="Dhami P."/>
            <person name="Davies J."/>
            <person name="Dunn M."/>
            <person name="Earthrowl M.E."/>
            <person name="Ellington A.E."/>
            <person name="Evans K.A."/>
            <person name="Faulkner L."/>
            <person name="Francis M.D."/>
            <person name="Frankish A."/>
            <person name="Frankland J."/>
            <person name="French L."/>
            <person name="Garner P."/>
            <person name="Garnett J."/>
            <person name="Ghori M.J."/>
            <person name="Gilby L.M."/>
            <person name="Gillson C.J."/>
            <person name="Glithero R.J."/>
            <person name="Grafham D.V."/>
            <person name="Grant M."/>
            <person name="Gribble S."/>
            <person name="Griffiths C."/>
            <person name="Griffiths M.N.D."/>
            <person name="Hall R."/>
            <person name="Halls K.S."/>
            <person name="Hammond S."/>
            <person name="Harley J.L."/>
            <person name="Hart E.A."/>
            <person name="Heath P.D."/>
            <person name="Heathcott R."/>
            <person name="Holmes S.J."/>
            <person name="Howden P.J."/>
            <person name="Howe K.L."/>
            <person name="Howell G.R."/>
            <person name="Huckle E."/>
            <person name="Humphray S.J."/>
            <person name="Humphries M.D."/>
            <person name="Hunt A.R."/>
            <person name="Johnson C.M."/>
            <person name="Joy A.A."/>
            <person name="Kay M."/>
            <person name="Keenan S.J."/>
            <person name="Kimberley A.M."/>
            <person name="King A."/>
            <person name="Laird G.K."/>
            <person name="Langford C."/>
            <person name="Lawlor S."/>
            <person name="Leongamornlert D.A."/>
            <person name="Leversha M."/>
            <person name="Lloyd C.R."/>
            <person name="Lloyd D.M."/>
            <person name="Loveland J.E."/>
            <person name="Lovell J."/>
            <person name="Martin S."/>
            <person name="Mashreghi-Mohammadi M."/>
            <person name="Maslen G.L."/>
            <person name="Matthews L."/>
            <person name="McCann O.T."/>
            <person name="McLaren S.J."/>
            <person name="McLay K."/>
            <person name="McMurray A."/>
            <person name="Moore M.J.F."/>
            <person name="Mullikin J.C."/>
            <person name="Niblett D."/>
            <person name="Nickerson T."/>
            <person name="Novik K.L."/>
            <person name="Oliver K."/>
            <person name="Overton-Larty E.K."/>
            <person name="Parker A."/>
            <person name="Patel R."/>
            <person name="Pearce A.V."/>
            <person name="Peck A.I."/>
            <person name="Phillimore B.J.C.T."/>
            <person name="Phillips S."/>
            <person name="Plumb R.W."/>
            <person name="Porter K.M."/>
            <person name="Ramsey Y."/>
            <person name="Ranby S.A."/>
            <person name="Rice C.M."/>
            <person name="Ross M.T."/>
            <person name="Searle S.M."/>
            <person name="Sehra H.K."/>
            <person name="Sheridan E."/>
            <person name="Skuce C.D."/>
            <person name="Smith S."/>
            <person name="Smith M."/>
            <person name="Spraggon L."/>
            <person name="Squares S.L."/>
            <person name="Steward C.A."/>
            <person name="Sycamore N."/>
            <person name="Tamlyn-Hall G."/>
            <person name="Tester J."/>
            <person name="Theaker A.J."/>
            <person name="Thomas D.W."/>
            <person name="Thorpe A."/>
            <person name="Tracey A."/>
            <person name="Tromans A."/>
            <person name="Tubby B."/>
            <person name="Wall M."/>
            <person name="Wallis J.M."/>
            <person name="West A.P."/>
            <person name="White S.S."/>
            <person name="Whitehead S.L."/>
            <person name="Whittaker H."/>
            <person name="Wild A."/>
            <person name="Willey D.J."/>
            <person name="Wilmer T.E."/>
            <person name="Wood J.M."/>
            <person name="Wray P.W."/>
            <person name="Wyatt J.C."/>
            <person name="Young L."/>
            <person name="Younger R.M."/>
            <person name="Bentley D.R."/>
            <person name="Coulson A."/>
            <person name="Durbin R.M."/>
            <person name="Hubbard T."/>
            <person name="Sulston J.E."/>
            <person name="Dunham I."/>
            <person name="Rogers J."/>
            <person name="Beck S."/>
        </authorList>
    </citation>
    <scope>NUCLEOTIDE SEQUENCE [LARGE SCALE GENOMIC DNA]</scope>
</reference>
<reference key="4">
    <citation type="submission" date="2005-09" db="EMBL/GenBank/DDBJ databases">
        <authorList>
            <person name="Mural R.J."/>
            <person name="Istrail S."/>
            <person name="Sutton G.G."/>
            <person name="Florea L."/>
            <person name="Halpern A.L."/>
            <person name="Mobarry C.M."/>
            <person name="Lippert R."/>
            <person name="Walenz B."/>
            <person name="Shatkay H."/>
            <person name="Dew I."/>
            <person name="Miller J.R."/>
            <person name="Flanigan M.J."/>
            <person name="Edwards N.J."/>
            <person name="Bolanos R."/>
            <person name="Fasulo D."/>
            <person name="Halldorsson B.V."/>
            <person name="Hannenhalli S."/>
            <person name="Turner R."/>
            <person name="Yooseph S."/>
            <person name="Lu F."/>
            <person name="Nusskern D.R."/>
            <person name="Shue B.C."/>
            <person name="Zheng X.H."/>
            <person name="Zhong F."/>
            <person name="Delcher A.L."/>
            <person name="Huson D.H."/>
            <person name="Kravitz S.A."/>
            <person name="Mouchard L."/>
            <person name="Reinert K."/>
            <person name="Remington K.A."/>
            <person name="Clark A.G."/>
            <person name="Waterman M.S."/>
            <person name="Eichler E.E."/>
            <person name="Adams M.D."/>
            <person name="Hunkapiller M.W."/>
            <person name="Myers E.W."/>
            <person name="Venter J.C."/>
        </authorList>
    </citation>
    <scope>NUCLEOTIDE SEQUENCE [LARGE SCALE GENOMIC DNA]</scope>
</reference>
<reference key="5">
    <citation type="journal article" date="2004" name="Genome Res.">
        <title>The status, quality, and expansion of the NIH full-length cDNA project: the Mammalian Gene Collection (MGC).</title>
        <authorList>
            <consortium name="The MGC Project Team"/>
        </authorList>
    </citation>
    <scope>NUCLEOTIDE SEQUENCE [LARGE SCALE MRNA] (ISOFORM 1)</scope>
    <source>
        <tissue>Placenta</tissue>
    </source>
</reference>
<feature type="chain" id="PRO_0000154538" description="cAMP-dependent protein kinase inhibitor beta">
    <location>
        <begin position="1"/>
        <end position="78"/>
    </location>
</feature>
<feature type="region of interest" description="Disordered" evidence="2">
    <location>
        <begin position="1"/>
        <end position="78"/>
    </location>
</feature>
<feature type="compositionally biased region" description="Basic and acidic residues" evidence="2">
    <location>
        <begin position="1"/>
        <end position="10"/>
    </location>
</feature>
<feature type="compositionally biased region" description="Polar residues" evidence="2">
    <location>
        <begin position="33"/>
        <end position="42"/>
    </location>
</feature>
<feature type="compositionally biased region" description="Basic and acidic residues" evidence="2">
    <location>
        <begin position="53"/>
        <end position="78"/>
    </location>
</feature>
<feature type="site" description="Important for inhibition" evidence="1">
    <location>
        <position position="23"/>
    </location>
</feature>
<feature type="site" description="Important for inhibition" evidence="1">
    <location>
        <position position="26"/>
    </location>
</feature>
<feature type="site" description="Important for inhibition" evidence="1">
    <location>
        <position position="27"/>
    </location>
</feature>
<feature type="splice variant" id="VSP_046922" description="In isoform 2." evidence="3">
    <original>M</original>
    <variation>MSHQDVAM</variation>
    <location>
        <position position="1"/>
    </location>
</feature>
<dbReference type="EMBL" id="AF225513">
    <property type="protein sequence ID" value="AAK00638.1"/>
    <property type="molecule type" value="mRNA"/>
</dbReference>
<dbReference type="EMBL" id="AK315151">
    <property type="protein sequence ID" value="BAG37599.1"/>
    <property type="molecule type" value="mRNA"/>
</dbReference>
<dbReference type="EMBL" id="AF087873">
    <property type="protein sequence ID" value="AAM10501.1"/>
    <property type="molecule type" value="mRNA"/>
</dbReference>
<dbReference type="EMBL" id="AL512283">
    <property type="status" value="NOT_ANNOTATED_CDS"/>
    <property type="molecule type" value="Genomic_DNA"/>
</dbReference>
<dbReference type="EMBL" id="AL513481">
    <property type="status" value="NOT_ANNOTATED_CDS"/>
    <property type="molecule type" value="Genomic_DNA"/>
</dbReference>
<dbReference type="EMBL" id="Z99129">
    <property type="status" value="NOT_ANNOTATED_CDS"/>
    <property type="molecule type" value="Genomic_DNA"/>
</dbReference>
<dbReference type="EMBL" id="CH471051">
    <property type="protein sequence ID" value="EAW48171.1"/>
    <property type="molecule type" value="Genomic_DNA"/>
</dbReference>
<dbReference type="EMBL" id="BC036011">
    <property type="protein sequence ID" value="AAH36011.1"/>
    <property type="molecule type" value="mRNA"/>
</dbReference>
<dbReference type="EMBL" id="BC093027">
    <property type="protein sequence ID" value="AAH93027.1"/>
    <property type="molecule type" value="mRNA"/>
</dbReference>
<dbReference type="CCDS" id="CCDS5126.1">
    <molecule id="Q9C010-1"/>
</dbReference>
<dbReference type="CCDS" id="CCDS59033.1">
    <molecule id="Q9C010-2"/>
</dbReference>
<dbReference type="RefSeq" id="NP_001257322.1">
    <molecule id="Q9C010-1"/>
    <property type="nucleotide sequence ID" value="NM_001270393.2"/>
</dbReference>
<dbReference type="RefSeq" id="NP_001257323.1">
    <molecule id="Q9C010-2"/>
    <property type="nucleotide sequence ID" value="NM_001270394.2"/>
</dbReference>
<dbReference type="RefSeq" id="NP_001257324.1">
    <molecule id="Q9C010-2"/>
    <property type="nucleotide sequence ID" value="NM_001270395.2"/>
</dbReference>
<dbReference type="RefSeq" id="NP_115860.1">
    <molecule id="Q9C010-1"/>
    <property type="nucleotide sequence ID" value="NM_032471.6"/>
</dbReference>
<dbReference type="RefSeq" id="NP_861459.1">
    <molecule id="Q9C010-1"/>
    <property type="nucleotide sequence ID" value="NM_181794.3"/>
</dbReference>
<dbReference type="RefSeq" id="NP_861460.1">
    <molecule id="Q9C010-1"/>
    <property type="nucleotide sequence ID" value="NM_181795.3"/>
</dbReference>
<dbReference type="RefSeq" id="XP_011534232.1">
    <molecule id="Q9C010-2"/>
    <property type="nucleotide sequence ID" value="XM_011535930.4"/>
</dbReference>
<dbReference type="RefSeq" id="XP_011534233.1">
    <property type="nucleotide sequence ID" value="XM_011535931.2"/>
</dbReference>
<dbReference type="RefSeq" id="XP_011534234.1">
    <molecule id="Q9C010-2"/>
    <property type="nucleotide sequence ID" value="XM_011535932.4"/>
</dbReference>
<dbReference type="RefSeq" id="XP_011534235.1">
    <molecule id="Q9C010-2"/>
    <property type="nucleotide sequence ID" value="XM_011535933.4"/>
</dbReference>
<dbReference type="RefSeq" id="XP_011534236.1">
    <property type="nucleotide sequence ID" value="XM_011535934.2"/>
</dbReference>
<dbReference type="RefSeq" id="XP_011534237.1">
    <property type="nucleotide sequence ID" value="XM_011535935.2"/>
</dbReference>
<dbReference type="RefSeq" id="XP_011534238.1">
    <property type="nucleotide sequence ID" value="XM_011535936.1"/>
</dbReference>
<dbReference type="RefSeq" id="XP_011534239.1">
    <molecule id="Q9C010-1"/>
    <property type="nucleotide sequence ID" value="XM_011535937.3"/>
</dbReference>
<dbReference type="RefSeq" id="XP_047274958.1">
    <molecule id="Q9C010-2"/>
    <property type="nucleotide sequence ID" value="XM_047419002.1"/>
</dbReference>
<dbReference type="RefSeq" id="XP_047274959.1">
    <molecule id="Q9C010-2"/>
    <property type="nucleotide sequence ID" value="XM_047419003.1"/>
</dbReference>
<dbReference type="RefSeq" id="XP_047274960.1">
    <molecule id="Q9C010-2"/>
    <property type="nucleotide sequence ID" value="XM_047419004.1"/>
</dbReference>
<dbReference type="RefSeq" id="XP_047274961.1">
    <molecule id="Q9C010-1"/>
    <property type="nucleotide sequence ID" value="XM_047419005.1"/>
</dbReference>
<dbReference type="RefSeq" id="XP_047274962.1">
    <molecule id="Q9C010-1"/>
    <property type="nucleotide sequence ID" value="XM_047419006.1"/>
</dbReference>
<dbReference type="RefSeq" id="XP_054211814.1">
    <molecule id="Q9C010-2"/>
    <property type="nucleotide sequence ID" value="XM_054355839.1"/>
</dbReference>
<dbReference type="RefSeq" id="XP_054211815.1">
    <molecule id="Q9C010-2"/>
    <property type="nucleotide sequence ID" value="XM_054355840.1"/>
</dbReference>
<dbReference type="RefSeq" id="XP_054211816.1">
    <molecule id="Q9C010-2"/>
    <property type="nucleotide sequence ID" value="XM_054355841.1"/>
</dbReference>
<dbReference type="RefSeq" id="XP_054211817.1">
    <molecule id="Q9C010-2"/>
    <property type="nucleotide sequence ID" value="XM_054355842.1"/>
</dbReference>
<dbReference type="RefSeq" id="XP_054211818.1">
    <molecule id="Q9C010-2"/>
    <property type="nucleotide sequence ID" value="XM_054355843.1"/>
</dbReference>
<dbReference type="RefSeq" id="XP_054211819.1">
    <molecule id="Q9C010-1"/>
    <property type="nucleotide sequence ID" value="XM_054355844.1"/>
</dbReference>
<dbReference type="RefSeq" id="XP_054211820.1">
    <molecule id="Q9C010-1"/>
    <property type="nucleotide sequence ID" value="XM_054355845.1"/>
</dbReference>
<dbReference type="BioGRID" id="111557">
    <property type="interactions" value="7"/>
</dbReference>
<dbReference type="FunCoup" id="Q9C010">
    <property type="interactions" value="1502"/>
</dbReference>
<dbReference type="IntAct" id="Q9C010">
    <property type="interactions" value="5"/>
</dbReference>
<dbReference type="STRING" id="9606.ENSP00000480824"/>
<dbReference type="iPTMnet" id="Q9C010"/>
<dbReference type="PhosphoSitePlus" id="Q9C010"/>
<dbReference type="BioMuta" id="PKIB"/>
<dbReference type="jPOST" id="Q9C010"/>
<dbReference type="MassIVE" id="Q9C010"/>
<dbReference type="PaxDb" id="9606-ENSP00000480824"/>
<dbReference type="PeptideAtlas" id="Q9C010"/>
<dbReference type="ProteomicsDB" id="79940">
    <molecule id="Q9C010-1"/>
</dbReference>
<dbReference type="Pumba" id="Q9C010"/>
<dbReference type="Antibodypedia" id="32638">
    <property type="antibodies" value="107 antibodies from 21 providers"/>
</dbReference>
<dbReference type="DNASU" id="5570"/>
<dbReference type="Ensembl" id="ENST00000258014.3">
    <molecule id="Q9C010-2"/>
    <property type="protein sequence ID" value="ENSP00000258014.3"/>
    <property type="gene ID" value="ENSG00000135549.16"/>
</dbReference>
<dbReference type="Ensembl" id="ENST00000354275.2">
    <molecule id="Q9C010-1"/>
    <property type="protein sequence ID" value="ENSP00000346227.2"/>
    <property type="gene ID" value="ENSG00000135549.16"/>
</dbReference>
<dbReference type="Ensembl" id="ENST00000368448.5">
    <molecule id="Q9C010-1"/>
    <property type="protein sequence ID" value="ENSP00000357433.1"/>
    <property type="gene ID" value="ENSG00000135549.16"/>
</dbReference>
<dbReference type="Ensembl" id="ENST00000368452.7">
    <molecule id="Q9C010-1"/>
    <property type="protein sequence ID" value="ENSP00000357437.2"/>
    <property type="gene ID" value="ENSG00000135549.16"/>
</dbReference>
<dbReference type="Ensembl" id="ENST00000392490.5">
    <molecule id="Q9C010-1"/>
    <property type="protein sequence ID" value="ENSP00000376280.1"/>
    <property type="gene ID" value="ENSG00000135549.16"/>
</dbReference>
<dbReference type="Ensembl" id="ENST00000392491.6">
    <molecule id="Q9C010-1"/>
    <property type="protein sequence ID" value="ENSP00000376281.1"/>
    <property type="gene ID" value="ENSG00000135549.16"/>
</dbReference>
<dbReference type="Ensembl" id="ENST00000615438.4">
    <molecule id="Q9C010-2"/>
    <property type="protein sequence ID" value="ENSP00000480824.1"/>
    <property type="gene ID" value="ENSG00000135549.16"/>
</dbReference>
<dbReference type="GeneID" id="5570"/>
<dbReference type="KEGG" id="hsa:5570"/>
<dbReference type="MANE-Select" id="ENST00000368452.7">
    <property type="protein sequence ID" value="ENSP00000357437.2"/>
    <property type="RefSeq nucleotide sequence ID" value="NM_181795.3"/>
    <property type="RefSeq protein sequence ID" value="NP_861460.1"/>
</dbReference>
<dbReference type="UCSC" id="uc003pyz.4">
    <molecule id="Q9C010-1"/>
    <property type="organism name" value="human"/>
</dbReference>
<dbReference type="AGR" id="HGNC:9018"/>
<dbReference type="CTD" id="5570"/>
<dbReference type="DisGeNET" id="5570"/>
<dbReference type="GeneCards" id="PKIB"/>
<dbReference type="HGNC" id="HGNC:9018">
    <property type="gene designation" value="PKIB"/>
</dbReference>
<dbReference type="HPA" id="ENSG00000135549">
    <property type="expression patterns" value="Tissue enhanced (brain, intestine)"/>
</dbReference>
<dbReference type="MIM" id="606914">
    <property type="type" value="gene"/>
</dbReference>
<dbReference type="neXtProt" id="NX_Q9C010"/>
<dbReference type="OpenTargets" id="ENSG00000135549"/>
<dbReference type="PharmGKB" id="PA33350"/>
<dbReference type="VEuPathDB" id="HostDB:ENSG00000135549"/>
<dbReference type="eggNOG" id="ENOG502S8BW">
    <property type="taxonomic scope" value="Eukaryota"/>
</dbReference>
<dbReference type="GeneTree" id="ENSGT00530000064264"/>
<dbReference type="HOGENOM" id="CLU_163471_1_0_1"/>
<dbReference type="InParanoid" id="Q9C010"/>
<dbReference type="OMA" id="YQDVAMR"/>
<dbReference type="OrthoDB" id="6380180at2759"/>
<dbReference type="PAN-GO" id="Q9C010">
    <property type="GO annotations" value="4 GO annotations based on evolutionary models"/>
</dbReference>
<dbReference type="PhylomeDB" id="Q9C010"/>
<dbReference type="TreeFam" id="TF330809"/>
<dbReference type="PathwayCommons" id="Q9C010"/>
<dbReference type="SignaLink" id="Q9C010"/>
<dbReference type="BioGRID-ORCS" id="5570">
    <property type="hits" value="14 hits in 1156 CRISPR screens"/>
</dbReference>
<dbReference type="ChiTaRS" id="PKIB">
    <property type="organism name" value="human"/>
</dbReference>
<dbReference type="GeneWiki" id="PKIB"/>
<dbReference type="GenomeRNAi" id="5570"/>
<dbReference type="Pharos" id="Q9C010">
    <property type="development level" value="Tbio"/>
</dbReference>
<dbReference type="PRO" id="PR:Q9C010"/>
<dbReference type="Proteomes" id="UP000005640">
    <property type="component" value="Chromosome 6"/>
</dbReference>
<dbReference type="RNAct" id="Q9C010">
    <property type="molecule type" value="protein"/>
</dbReference>
<dbReference type="Bgee" id="ENSG00000135549">
    <property type="expression patterns" value="Expressed in cerebellar vermis and 145 other cell types or tissues"/>
</dbReference>
<dbReference type="ExpressionAtlas" id="Q9C010">
    <property type="expression patterns" value="baseline and differential"/>
</dbReference>
<dbReference type="GO" id="GO:0005737">
    <property type="term" value="C:cytoplasm"/>
    <property type="evidence" value="ECO:0000318"/>
    <property type="project" value="GO_Central"/>
</dbReference>
<dbReference type="GO" id="GO:0005634">
    <property type="term" value="C:nucleus"/>
    <property type="evidence" value="ECO:0000318"/>
    <property type="project" value="GO_Central"/>
</dbReference>
<dbReference type="GO" id="GO:0004862">
    <property type="term" value="F:cAMP-dependent protein kinase inhibitor activity"/>
    <property type="evidence" value="ECO:0000318"/>
    <property type="project" value="GO_Central"/>
</dbReference>
<dbReference type="GO" id="GO:0032206">
    <property type="term" value="P:positive regulation of telomere maintenance"/>
    <property type="evidence" value="ECO:0000315"/>
    <property type="project" value="BHF-UCL"/>
</dbReference>
<dbReference type="InterPro" id="IPR004171">
    <property type="entry name" value="cAMP_dep_PKI"/>
</dbReference>
<dbReference type="PANTHER" id="PTHR15416">
    <property type="entry name" value="CAMP-DEPENDENT PROTEIN KINASE INHIBITOR/PKI"/>
    <property type="match status" value="1"/>
</dbReference>
<dbReference type="Pfam" id="PF02827">
    <property type="entry name" value="PKI"/>
    <property type="match status" value="1"/>
</dbReference>
<dbReference type="PIRSF" id="PIRSF001667">
    <property type="entry name" value="PKI"/>
    <property type="match status" value="1"/>
</dbReference>
<organism>
    <name type="scientific">Homo sapiens</name>
    <name type="common">Human</name>
    <dbReference type="NCBI Taxonomy" id="9606"/>
    <lineage>
        <taxon>Eukaryota</taxon>
        <taxon>Metazoa</taxon>
        <taxon>Chordata</taxon>
        <taxon>Craniata</taxon>
        <taxon>Vertebrata</taxon>
        <taxon>Euteleostomi</taxon>
        <taxon>Mammalia</taxon>
        <taxon>Eutheria</taxon>
        <taxon>Euarchontoglires</taxon>
        <taxon>Primates</taxon>
        <taxon>Haplorrhini</taxon>
        <taxon>Catarrhini</taxon>
        <taxon>Hominidae</taxon>
        <taxon>Homo</taxon>
    </lineage>
</organism>
<protein>
    <recommendedName>
        <fullName>cAMP-dependent protein kinase inhibitor beta</fullName>
        <shortName>PKI-beta</shortName>
    </recommendedName>
</protein>
<sequence>MRTDSSKMTDVESGVANFASSARAGRRNALPDIQSSAATDGTSDLPLKLEALSVKEDAKEKDEKTTQDQLEKPQNEEK</sequence>